<proteinExistence type="inferred from homology"/>
<feature type="chain" id="PRO_0000348706" description="tRNA-cytidine(32) 2-sulfurtransferase">
    <location>
        <begin position="1"/>
        <end position="308"/>
    </location>
</feature>
<feature type="short sequence motif" description="PP-loop motif" evidence="1">
    <location>
        <begin position="39"/>
        <end position="44"/>
    </location>
</feature>
<feature type="binding site" evidence="1">
    <location>
        <position position="114"/>
    </location>
    <ligand>
        <name>[4Fe-4S] cluster</name>
        <dbReference type="ChEBI" id="CHEBI:49883"/>
    </ligand>
</feature>
<feature type="binding site" evidence="1">
    <location>
        <position position="117"/>
    </location>
    <ligand>
        <name>[4Fe-4S] cluster</name>
        <dbReference type="ChEBI" id="CHEBI:49883"/>
    </ligand>
</feature>
<feature type="binding site" evidence="1">
    <location>
        <position position="205"/>
    </location>
    <ligand>
        <name>[4Fe-4S] cluster</name>
        <dbReference type="ChEBI" id="CHEBI:49883"/>
    </ligand>
</feature>
<organism>
    <name type="scientific">Cupriavidus taiwanensis (strain DSM 17343 / BCRC 17206 / CCUG 44338 / CIP 107171 / LMG 19424 / R1)</name>
    <name type="common">Ralstonia taiwanensis (strain LMG 19424)</name>
    <dbReference type="NCBI Taxonomy" id="977880"/>
    <lineage>
        <taxon>Bacteria</taxon>
        <taxon>Pseudomonadati</taxon>
        <taxon>Pseudomonadota</taxon>
        <taxon>Betaproteobacteria</taxon>
        <taxon>Burkholderiales</taxon>
        <taxon>Burkholderiaceae</taxon>
        <taxon>Cupriavidus</taxon>
    </lineage>
</organism>
<accession>B2AGH6</accession>
<comment type="function">
    <text evidence="1">Catalyzes the ATP-dependent 2-thiolation of cytidine in position 32 of tRNA, to form 2-thiocytidine (s(2)C32). The sulfur atoms are provided by the cysteine/cysteine desulfurase (IscS) system.</text>
</comment>
<comment type="catalytic activity">
    <reaction evidence="1">
        <text>cytidine(32) in tRNA + S-sulfanyl-L-cysteinyl-[cysteine desulfurase] + AH2 + ATP = 2-thiocytidine(32) in tRNA + L-cysteinyl-[cysteine desulfurase] + A + AMP + diphosphate + H(+)</text>
        <dbReference type="Rhea" id="RHEA:57048"/>
        <dbReference type="Rhea" id="RHEA-COMP:10288"/>
        <dbReference type="Rhea" id="RHEA-COMP:12157"/>
        <dbReference type="Rhea" id="RHEA-COMP:12158"/>
        <dbReference type="Rhea" id="RHEA-COMP:14821"/>
        <dbReference type="ChEBI" id="CHEBI:13193"/>
        <dbReference type="ChEBI" id="CHEBI:15378"/>
        <dbReference type="ChEBI" id="CHEBI:17499"/>
        <dbReference type="ChEBI" id="CHEBI:29950"/>
        <dbReference type="ChEBI" id="CHEBI:30616"/>
        <dbReference type="ChEBI" id="CHEBI:33019"/>
        <dbReference type="ChEBI" id="CHEBI:61963"/>
        <dbReference type="ChEBI" id="CHEBI:82748"/>
        <dbReference type="ChEBI" id="CHEBI:141453"/>
        <dbReference type="ChEBI" id="CHEBI:456215"/>
    </reaction>
    <physiologicalReaction direction="left-to-right" evidence="1">
        <dbReference type="Rhea" id="RHEA:57049"/>
    </physiologicalReaction>
</comment>
<comment type="cofactor">
    <cofactor evidence="1">
        <name>Mg(2+)</name>
        <dbReference type="ChEBI" id="CHEBI:18420"/>
    </cofactor>
</comment>
<comment type="cofactor">
    <cofactor evidence="1">
        <name>[4Fe-4S] cluster</name>
        <dbReference type="ChEBI" id="CHEBI:49883"/>
    </cofactor>
    <text evidence="1">Binds 1 [4Fe-4S] cluster per subunit. The cluster is chelated by three Cys residues, the fourth Fe has a free coordination site that may bind a sulfur atom transferred from the persulfide of IscS.</text>
</comment>
<comment type="pathway">
    <text evidence="1">tRNA modification.</text>
</comment>
<comment type="subunit">
    <text evidence="1">Homodimer.</text>
</comment>
<comment type="subcellular location">
    <subcellularLocation>
        <location evidence="1">Cytoplasm</location>
    </subcellularLocation>
</comment>
<comment type="miscellaneous">
    <text evidence="1">The thiolation reaction likely consists of two steps: a first activation step by ATP to form an adenylated intermediate of the target base of tRNA, and a second nucleophilic substitution step of the sulfur (S) atom supplied by the hydrosulfide attached to the Fe-S cluster.</text>
</comment>
<comment type="similarity">
    <text evidence="1">Belongs to the TtcA family.</text>
</comment>
<reference key="1">
    <citation type="journal article" date="2008" name="Genome Res.">
        <title>Genome sequence of the beta-rhizobium Cupriavidus taiwanensis and comparative genomics of rhizobia.</title>
        <authorList>
            <person name="Amadou C."/>
            <person name="Pascal G."/>
            <person name="Mangenot S."/>
            <person name="Glew M."/>
            <person name="Bontemps C."/>
            <person name="Capela D."/>
            <person name="Carrere S."/>
            <person name="Cruveiller S."/>
            <person name="Dossat C."/>
            <person name="Lajus A."/>
            <person name="Marchetti M."/>
            <person name="Poinsot V."/>
            <person name="Rouy Z."/>
            <person name="Servin B."/>
            <person name="Saad M."/>
            <person name="Schenowitz C."/>
            <person name="Barbe V."/>
            <person name="Batut J."/>
            <person name="Medigue C."/>
            <person name="Masson-Boivin C."/>
        </authorList>
    </citation>
    <scope>NUCLEOTIDE SEQUENCE [LARGE SCALE GENOMIC DNA]</scope>
    <source>
        <strain>DSM 17343 / BCRC 17206 / CCUG 44338 / CIP 107171 / LMG 19424 / R1</strain>
    </source>
</reference>
<sequence length="308" mass="34339">MSHSNNFYRLETRLQSQTGKAIGDFGMIEDGDTVLVCMSGGKDSYTMLSVLMALQKRAPIKFKLIAMNLDQKQPGFPEHILPEYLKSVGVEYVIVEADTYSIVKEKVPEGKTTCSLCSRLRRGVIYRTAKELGANKIALGHHRDDIVNTFFLNMFFGGKMKAMPPKLATDDGAHIVIRPLAYCSEKDIASYARAMEFPIIPCNLCGSQENLQRKKVSEMLQEWERQNPGRIDNIFSALRNVVPSHLADTELFPFTGLATGLAKVDEASLFGETTFQQQPLTFAGSLDENRMEFVRFERAPAAEPAGTP</sequence>
<evidence type="ECO:0000255" key="1">
    <source>
        <dbReference type="HAMAP-Rule" id="MF_01850"/>
    </source>
</evidence>
<gene>
    <name evidence="1" type="primary">ttcA</name>
    <name type="ordered locus">RALTA_A0202</name>
</gene>
<dbReference type="EC" id="2.8.1.-" evidence="1"/>
<dbReference type="EMBL" id="CU633749">
    <property type="protein sequence ID" value="CAP62875.1"/>
    <property type="molecule type" value="Genomic_DNA"/>
</dbReference>
<dbReference type="RefSeq" id="WP_012351543.1">
    <property type="nucleotide sequence ID" value="NC_010528.1"/>
</dbReference>
<dbReference type="SMR" id="B2AGH6"/>
<dbReference type="GeneID" id="29763049"/>
<dbReference type="KEGG" id="cti:RALTA_A0202"/>
<dbReference type="eggNOG" id="COG0037">
    <property type="taxonomic scope" value="Bacteria"/>
</dbReference>
<dbReference type="HOGENOM" id="CLU_026481_0_0_4"/>
<dbReference type="BioCyc" id="CTAI977880:RALTA_RS01000-MONOMER"/>
<dbReference type="Proteomes" id="UP000001692">
    <property type="component" value="Chromosome 1"/>
</dbReference>
<dbReference type="GO" id="GO:0005737">
    <property type="term" value="C:cytoplasm"/>
    <property type="evidence" value="ECO:0007669"/>
    <property type="project" value="UniProtKB-SubCell"/>
</dbReference>
<dbReference type="GO" id="GO:0051539">
    <property type="term" value="F:4 iron, 4 sulfur cluster binding"/>
    <property type="evidence" value="ECO:0007669"/>
    <property type="project" value="UniProtKB-UniRule"/>
</dbReference>
<dbReference type="GO" id="GO:0005524">
    <property type="term" value="F:ATP binding"/>
    <property type="evidence" value="ECO:0007669"/>
    <property type="project" value="UniProtKB-UniRule"/>
</dbReference>
<dbReference type="GO" id="GO:0000287">
    <property type="term" value="F:magnesium ion binding"/>
    <property type="evidence" value="ECO:0007669"/>
    <property type="project" value="UniProtKB-UniRule"/>
</dbReference>
<dbReference type="GO" id="GO:0016783">
    <property type="term" value="F:sulfurtransferase activity"/>
    <property type="evidence" value="ECO:0007669"/>
    <property type="project" value="UniProtKB-UniRule"/>
</dbReference>
<dbReference type="GO" id="GO:0000049">
    <property type="term" value="F:tRNA binding"/>
    <property type="evidence" value="ECO:0007669"/>
    <property type="project" value="UniProtKB-KW"/>
</dbReference>
<dbReference type="GO" id="GO:0034227">
    <property type="term" value="P:tRNA thio-modification"/>
    <property type="evidence" value="ECO:0007669"/>
    <property type="project" value="UniProtKB-UniRule"/>
</dbReference>
<dbReference type="CDD" id="cd24138">
    <property type="entry name" value="TtcA-like"/>
    <property type="match status" value="1"/>
</dbReference>
<dbReference type="Gene3D" id="3.40.50.620">
    <property type="entry name" value="HUPs"/>
    <property type="match status" value="1"/>
</dbReference>
<dbReference type="HAMAP" id="MF_01850">
    <property type="entry name" value="TtcA"/>
    <property type="match status" value="1"/>
</dbReference>
<dbReference type="InterPro" id="IPR014729">
    <property type="entry name" value="Rossmann-like_a/b/a_fold"/>
</dbReference>
<dbReference type="InterPro" id="IPR011063">
    <property type="entry name" value="TilS/TtcA_N"/>
</dbReference>
<dbReference type="InterPro" id="IPR012089">
    <property type="entry name" value="tRNA_Cyd_32_2_STrfase"/>
</dbReference>
<dbReference type="NCBIfam" id="NF007972">
    <property type="entry name" value="PRK10696.1"/>
    <property type="match status" value="1"/>
</dbReference>
<dbReference type="PANTHER" id="PTHR43686:SF1">
    <property type="entry name" value="AMINOTRAN_5 DOMAIN-CONTAINING PROTEIN"/>
    <property type="match status" value="1"/>
</dbReference>
<dbReference type="PANTHER" id="PTHR43686">
    <property type="entry name" value="SULFURTRANSFERASE-RELATED"/>
    <property type="match status" value="1"/>
</dbReference>
<dbReference type="Pfam" id="PF01171">
    <property type="entry name" value="ATP_bind_3"/>
    <property type="match status" value="1"/>
</dbReference>
<dbReference type="SUPFAM" id="SSF52402">
    <property type="entry name" value="Adenine nucleotide alpha hydrolases-like"/>
    <property type="match status" value="1"/>
</dbReference>
<name>TTCA_CUPTR</name>
<keyword id="KW-0004">4Fe-4S</keyword>
<keyword id="KW-0067">ATP-binding</keyword>
<keyword id="KW-0963">Cytoplasm</keyword>
<keyword id="KW-0408">Iron</keyword>
<keyword id="KW-0411">Iron-sulfur</keyword>
<keyword id="KW-0460">Magnesium</keyword>
<keyword id="KW-0479">Metal-binding</keyword>
<keyword id="KW-0547">Nucleotide-binding</keyword>
<keyword id="KW-0694">RNA-binding</keyword>
<keyword id="KW-0808">Transferase</keyword>
<keyword id="KW-0819">tRNA processing</keyword>
<keyword id="KW-0820">tRNA-binding</keyword>
<protein>
    <recommendedName>
        <fullName evidence="1">tRNA-cytidine(32) 2-sulfurtransferase</fullName>
        <ecNumber evidence="1">2.8.1.-</ecNumber>
    </recommendedName>
    <alternativeName>
        <fullName evidence="1">Two-thiocytidine biosynthesis protein A</fullName>
    </alternativeName>
    <alternativeName>
        <fullName evidence="1">tRNA 2-thiocytidine biosynthesis protein TtcA</fullName>
    </alternativeName>
</protein>